<gene>
    <name evidence="27" type="primary">RBG7</name>
    <name evidence="29" type="synonym">CCR2</name>
    <name evidence="23 25" type="synonym">GR-RBP7</name>
    <name evidence="27" type="synonym">GRP7</name>
    <name evidence="28" type="synonym">SRBP1</name>
    <name evidence="32" type="ordered locus">At2g21660</name>
    <name evidence="33" type="ORF">F2G1.7</name>
</gene>
<proteinExistence type="evidence at protein level"/>
<sequence length="176" mass="16890">MASGDVEYRCFVGGLAWATDDRALETAFAQYGDVIDSKIINDRETGRSRGFGFVTFKDEKAMKDAIEGMNGQDLDGRSITVNEAQSRGSGGGGGHRGGGGGGYRSGGGGGYSGGGGSYGGGGGRREGGGGYSGGGGGYSSRGGGGGSYGGGRREGGGGYGGGEGGGYGGSGGGGGW</sequence>
<organism>
    <name type="scientific">Arabidopsis thaliana</name>
    <name type="common">Mouse-ear cress</name>
    <dbReference type="NCBI Taxonomy" id="3702"/>
    <lineage>
        <taxon>Eukaryota</taxon>
        <taxon>Viridiplantae</taxon>
        <taxon>Streptophyta</taxon>
        <taxon>Embryophyta</taxon>
        <taxon>Tracheophyta</taxon>
        <taxon>Spermatophyta</taxon>
        <taxon>Magnoliopsida</taxon>
        <taxon>eudicotyledons</taxon>
        <taxon>Gunneridae</taxon>
        <taxon>Pentapetalae</taxon>
        <taxon>rosids</taxon>
        <taxon>malvids</taxon>
        <taxon>Brassicales</taxon>
        <taxon>Brassicaceae</taxon>
        <taxon>Camelineae</taxon>
        <taxon>Arabidopsis</taxon>
    </lineage>
</organism>
<feature type="initiator methionine" description="Removed" evidence="36">
    <location>
        <position position="1"/>
    </location>
</feature>
<feature type="chain" id="PRO_0000081599" description="Glycine-rich RNA-binding protein 7">
    <location>
        <begin position="2"/>
        <end position="176"/>
    </location>
</feature>
<feature type="domain" description="RRM" evidence="1">
    <location>
        <begin position="8"/>
        <end position="86"/>
    </location>
</feature>
<feature type="region of interest" description="Required for RNA chaperone activity">
    <location>
        <begin position="2"/>
        <end position="41"/>
    </location>
</feature>
<feature type="region of interest" description="Disordered" evidence="2">
    <location>
        <begin position="83"/>
        <end position="103"/>
    </location>
</feature>
<feature type="region of interest" description="Glycine-rich (GR) required for cell-to-cell movement" evidence="31">
    <location>
        <begin position="88"/>
        <end position="175"/>
    </location>
</feature>
<feature type="region of interest" description="Nuclear targeting sequence (M9)">
    <location>
        <begin position="97"/>
        <end position="148"/>
    </location>
</feature>
<feature type="region of interest" description="Disordered" evidence="2">
    <location>
        <begin position="131"/>
        <end position="176"/>
    </location>
</feature>
<feature type="compositionally biased region" description="Gly residues" evidence="2">
    <location>
        <begin position="88"/>
        <end position="103"/>
    </location>
</feature>
<feature type="modified residue" description="N-acetylalanine" evidence="36">
    <location>
        <position position="2"/>
    </location>
</feature>
<feature type="modified residue" description="ADP-ribosylarginine; by HopU1" evidence="17">
    <location>
        <position position="49"/>
    </location>
</feature>
<feature type="modified residue" description="Phosphoserine" evidence="34">
    <location>
        <position position="105"/>
    </location>
</feature>
<feature type="modified residue" description="Phosphoserine" evidence="35">
    <location>
        <position position="117"/>
    </location>
</feature>
<feature type="splice variant" id="VSP_045855" description="In isoform 2." evidence="24 26 29">
    <original>IINDRETGRS</original>
    <variation>VCYTPRSDSE</variation>
    <location>
        <begin position="39"/>
        <end position="48"/>
    </location>
</feature>
<feature type="splice variant" id="VSP_045856" description="In isoform 2." evidence="24 26 29">
    <location>
        <begin position="49"/>
        <end position="176"/>
    </location>
</feature>
<feature type="mutagenesis site" description="Abolishes ADP-ribosylation by HopU1." evidence="9">
    <original>R</original>
    <variation>K</variation>
    <location>
        <position position="47"/>
    </location>
</feature>
<feature type="mutagenesis site" description="Abolishes ADP-ribosylation by HopU1. Enable to complement the rbg7 mutant." evidence="9 10 17 19">
    <original>R</original>
    <variation>K</variation>
    <location>
        <position position="49"/>
    </location>
</feature>
<feature type="mutagenesis site" description="Impairs RNA-binding and consequently impairs the regulation of its pre-mRNA and its downstream pre-mRNA target RBG8. Affects the alternative splicing of numerous targets." evidence="9 10 17 19">
    <original>R</original>
    <variation>Q</variation>
    <location>
        <position position="49"/>
    </location>
</feature>
<feature type="sequence conflict" description="In Ref. 8; AAM62447." evidence="30" ref="8">
    <location>
        <position position="133"/>
    </location>
</feature>
<name>RBG7_ARATH</name>
<protein>
    <recommendedName>
        <fullName evidence="23 25">Glycine-rich RNA-binding protein 7</fullName>
        <shortName evidence="23 25">AtGR-RBP7</shortName>
    </recommendedName>
    <alternativeName>
        <fullName evidence="27">AtRBG7</fullName>
    </alternativeName>
    <alternativeName>
        <fullName evidence="27">Glycine-rich protein 7</fullName>
        <shortName evidence="27">AtGRP7</shortName>
    </alternativeName>
    <alternativeName>
        <fullName evidence="29">Protein COLD, CIRCADIAN RHYTHM, AND RNA BINDING 2</fullName>
        <shortName evidence="29">Protein CCR2</shortName>
    </alternativeName>
    <alternativeName>
        <fullName evidence="28">Small RNA binding protein 1</fullName>
        <shortName evidence="28">AtSRBP1</shortName>
    </alternativeName>
</protein>
<comment type="function">
    <text evidence="3 4 6 7 8 10 11 12 13 14 16 17 18 19 20 22">Plays a role in RNA transcription or processing during stress. Binds RNAs and DNAs sequence with a preference to single-stranded nucleic acids. Displays strong affinity to poly(U) and poly(G) sequence. Involved in mRNA alternative splicing of numerous targets by modulating splice site selection. Negatively regulates the circadian oscillations of its own transcript as well as RBG8 transcript. Forms an interlocked post-transcriptional negative feedback loop with the RBG8 autoregulatory circuit. Both proteins negatively autoregulate and reciprocally crossregulate by binding to their pre-mRNAs and promoting unproductive splicing coupled to degradation via the NMD pathway. Involved in the regulation of abscisic acid and stress responses. Affects the growth and stress tolerance under high salt and dehydration stress conditions, and also confers freezing tolerance, particularly via the regulation of stomatal opening and closing in the guard cells. Exhibits RNA chaperone activity during the cold adaptation process. Involved in the export of mRNAs from the nucleus to the cytoplasm under cold stress conditions. Target of the Pseudomonas syringae type III effector HopU1, which could probably be involved in plant innate immunity. Component of the flowering autonomous pathway which promotes floral transition, at least partly by down-regulating FLC. Mediates cell-to-cell trafficking of RNA interference (RNAi) signals (small RNAs (sRNA), e.g. small interfering RNA (siRNA) and microRNA (miRNA)) which regulate growth and development, as well as responses to environmental inputs, including pathogen attack; can compromise zucchini yellow mosaic virus (ZYMV) and tobacco rattle virus (TRV) infections at the early stage (PubMed:31812689).</text>
</comment>
<comment type="subunit">
    <text evidence="5 17 20">Interacts with TRN1 (PubMed:14756317). Interacts with the Pseudomonas syringae type III effector HopU1 (PubMed:22013065). Binds to small phloem-mobile single-stranded RNAs (ss-sRNA, e.g. small interfering RNA (siRNA) and microRNA (miRNA)) in the phloeme exudate, including viral-derived sRNA (vsiRNA) (PubMed:31812689).</text>
</comment>
<comment type="interaction">
    <interactant intactId="EBI-1393626">
        <id>Q03250</id>
    </interactant>
    <interactant intactId="EBI-8801168">
        <id>C0LGT6</id>
        <label>EFR</label>
    </interactant>
    <organismsDiffer>false</organismsDiffer>
    <experiments>4</experiments>
</comment>
<comment type="interaction">
    <interactant intactId="EBI-1393626">
        <id>Q03250</id>
    </interactant>
    <interactant intactId="EBI-1799448">
        <id>Q9FL28</id>
        <label>FLS2</label>
    </interactant>
    <organismsDiffer>false</organismsDiffer>
    <experiments>4</experiments>
</comment>
<comment type="interaction">
    <interactant intactId="EBI-1393626">
        <id>Q03250</id>
    </interactant>
    <interactant intactId="EBI-8802399">
        <id>Q88A91</id>
        <label>hopU1</label>
    </interactant>
    <organismsDiffer>true</organismsDiffer>
    <experiments>2</experiments>
</comment>
<comment type="subcellular location">
    <subcellularLocation>
        <location>Cytoplasm</location>
    </subcellularLocation>
    <subcellularLocation>
        <location>Nucleus</location>
    </subcellularLocation>
    <subcellularLocation>
        <location evidence="20">Secreted</location>
    </subcellularLocation>
    <text evidence="20">Shuttling between nucleus and cytoplasm. Relocalization from the cytoplasm into the nucleus is mediated by TRN1. Observed in the phloem translocation stream (PubMed:31812689).</text>
</comment>
<comment type="alternative products">
    <event type="alternative splicing"/>
    <isoform>
        <id>Q03250-1</id>
        <name>1</name>
        <sequence type="displayed"/>
    </isoform>
    <isoform>
        <id>Q03250-2</id>
        <name>2</name>
        <sequence type="described" ref="VSP_045855 VSP_045856"/>
    </isoform>
</comment>
<comment type="tissue specificity">
    <text evidence="11 21">Ubiquitous with strong expression in guard cell.</text>
</comment>
<comment type="induction">
    <text evidence="6 7 8 13 15 18 21 22">Up-regulated by cold stress and down-regulated by dehydration stress, salt stress, abscisic acid (ABA) and mannitol. Circadian regulation. Induced by hydrogen peroxide (at the protein level). Up-regulated under P.carotovorum SCC1 (Pec) infection.</text>
</comment>
<comment type="domain">
    <text evidence="20">The glycine-rich (GR) domain is necessary and sufficient for cell-to-cell movement and to interefere with zucchini yellow mosaic virus (ZYMV) infection.</text>
</comment>
<comment type="domain">
    <text evidence="16">N-terminal part of the protein is one of the crucial determinant to confer RNA chaperone activity during cold adaptation process.</text>
</comment>
<comment type="PTM">
    <text evidence="9">ADP-ribosylated by the Pseudomonas syringae type III effector HopU1. ADP-ribosylation reduces the ability of the protein to bind RNA.</text>
</comment>
<comment type="disruption phenotype">
    <text evidence="7 9 11 12 17 18 20">Hypersensitive responses to ABA in both seed germination and root growth. Late-flowering. Increased germination rate and seedling growth under salt and dehydration stress. Impaired mRNA export under cold stress conditions. Defective in PAMP-triggered immunity (PTI) responses and high susceptibility to P.syringae and P.carotovorum SCC1 (Pec). Increased sensitivity to tobacco rattle virus (TRV) (PubMed:31812689). The triple mutant srbp1 srbp2 srbp3 is more susceptible to TRV (PubMed:31812689).</text>
</comment>
<comment type="miscellaneous">
    <text>Plants overexpressing RBG7 display retarded germination and affected seedling growth under salt and dehydration stress conditions, confer freezing tolerance and also possess enhanced resistance to P.syringae.</text>
</comment>
<comment type="miscellaneous">
    <molecule>Isoform 2</molecule>
    <text evidence="30">May be due to a competing donor splice site.</text>
</comment>
<comment type="similarity">
    <text evidence="30">Belongs to the GR-RBP family.</text>
</comment>
<comment type="sequence caution" evidence="30">
    <conflict type="miscellaneous discrepancy">
        <sequence resource="EMBL-CDS" id="AAK68766"/>
    </conflict>
    <text>Wrong choice of frame.</text>
</comment>
<comment type="sequence caution" evidence="30">
    <conflict type="miscellaneous discrepancy">
        <sequence resource="EMBL-CDS" id="AAL66938"/>
    </conflict>
    <text>Wrong choice of frame.</text>
</comment>
<comment type="sequence caution" evidence="30">
    <conflict type="miscellaneous discrepancy">
        <sequence resource="EMBL-CDS" id="BAH57083"/>
    </conflict>
    <text>Wrong choice of frame.</text>
</comment>
<comment type="sequence caution" evidence="30">
    <conflict type="frameshift">
        <sequence resource="EMBL" id="L04172"/>
    </conflict>
</comment>
<dbReference type="EMBL" id="Z14987">
    <property type="protein sequence ID" value="CAA78711.1"/>
    <property type="molecule type" value="mRNA"/>
</dbReference>
<dbReference type="EMBL" id="L00648">
    <property type="protein sequence ID" value="AAA32853.1"/>
    <property type="molecule type" value="mRNA"/>
</dbReference>
<dbReference type="EMBL" id="L04172">
    <property type="status" value="NOT_ANNOTATED_CDS"/>
    <property type="molecule type" value="mRNA"/>
</dbReference>
<dbReference type="EMBL" id="MN064663">
    <property type="protein sequence ID" value="QGZ19398.1"/>
    <property type="molecule type" value="mRNA"/>
</dbReference>
<dbReference type="EMBL" id="AC007119">
    <property type="protein sequence ID" value="AAD23639.1"/>
    <property type="molecule type" value="Genomic_DNA"/>
</dbReference>
<dbReference type="EMBL" id="CP002685">
    <property type="protein sequence ID" value="AEC07209.1"/>
    <property type="molecule type" value="Genomic_DNA"/>
</dbReference>
<dbReference type="EMBL" id="AF428381">
    <property type="protein sequence ID" value="AAL16149.1"/>
    <property type="molecule type" value="mRNA"/>
</dbReference>
<dbReference type="EMBL" id="AY054284">
    <property type="protein sequence ID" value="AAL06943.1"/>
    <property type="molecule type" value="mRNA"/>
</dbReference>
<dbReference type="EMBL" id="AY042826">
    <property type="protein sequence ID" value="AAK68766.1"/>
    <property type="status" value="ALT_SEQ"/>
    <property type="molecule type" value="mRNA"/>
</dbReference>
<dbReference type="EMBL" id="AY072523">
    <property type="protein sequence ID" value="AAL66938.1"/>
    <property type="status" value="ALT_SEQ"/>
    <property type="molecule type" value="mRNA"/>
</dbReference>
<dbReference type="EMBL" id="AK318968">
    <property type="protein sequence ID" value="BAH57083.1"/>
    <property type="status" value="ALT_SEQ"/>
    <property type="molecule type" value="mRNA"/>
</dbReference>
<dbReference type="EMBL" id="AY085214">
    <property type="protein sequence ID" value="AAM62447.1"/>
    <property type="molecule type" value="mRNA"/>
</dbReference>
<dbReference type="PIR" id="S30147">
    <property type="entry name" value="S30147"/>
</dbReference>
<dbReference type="RefSeq" id="NP_179760.1">
    <molecule id="Q03250-1"/>
    <property type="nucleotide sequence ID" value="NM_127738.5"/>
</dbReference>
<dbReference type="SMR" id="Q03250"/>
<dbReference type="BioGRID" id="2058">
    <property type="interactions" value="8"/>
</dbReference>
<dbReference type="FunCoup" id="Q03250">
    <property type="interactions" value="2320"/>
</dbReference>
<dbReference type="IntAct" id="Q03250">
    <property type="interactions" value="41"/>
</dbReference>
<dbReference type="MINT" id="Q03250"/>
<dbReference type="STRING" id="3702.Q03250"/>
<dbReference type="GlyGen" id="Q03250">
    <property type="glycosylation" value="2 sites, 1 O-linked glycan (2 sites)"/>
</dbReference>
<dbReference type="iPTMnet" id="Q03250"/>
<dbReference type="MetOSite" id="Q03250"/>
<dbReference type="SwissPalm" id="Q03250"/>
<dbReference type="PaxDb" id="3702-AT2G21660.1"/>
<dbReference type="ProMEX" id="Q03250"/>
<dbReference type="ProteomicsDB" id="225967">
    <molecule id="Q03250-1"/>
</dbReference>
<dbReference type="EnsemblPlants" id="AT2G21660.1">
    <molecule id="Q03250-1"/>
    <property type="protein sequence ID" value="AT2G21660.1"/>
    <property type="gene ID" value="AT2G21660"/>
</dbReference>
<dbReference type="GeneID" id="816705"/>
<dbReference type="Gramene" id="AT2G21660.1">
    <molecule id="Q03250-1"/>
    <property type="protein sequence ID" value="AT2G21660.1"/>
    <property type="gene ID" value="AT2G21660"/>
</dbReference>
<dbReference type="KEGG" id="ath:AT2G21660"/>
<dbReference type="Araport" id="AT2G21660"/>
<dbReference type="TAIR" id="AT2G21660">
    <property type="gene designation" value="CCR2"/>
</dbReference>
<dbReference type="eggNOG" id="KOG0118">
    <property type="taxonomic scope" value="Eukaryota"/>
</dbReference>
<dbReference type="HOGENOM" id="CLU_012062_28_1_1"/>
<dbReference type="InParanoid" id="Q03250"/>
<dbReference type="OMA" id="GWEDRSY"/>
<dbReference type="OrthoDB" id="439808at2759"/>
<dbReference type="CD-CODE" id="4299E36E">
    <property type="entry name" value="Nucleolus"/>
</dbReference>
<dbReference type="PRO" id="PR:Q03250"/>
<dbReference type="Proteomes" id="UP000006548">
    <property type="component" value="Chromosome 2"/>
</dbReference>
<dbReference type="ExpressionAtlas" id="Q03250">
    <property type="expression patterns" value="baseline and differential"/>
</dbReference>
<dbReference type="GO" id="GO:0009507">
    <property type="term" value="C:chloroplast"/>
    <property type="evidence" value="ECO:0007005"/>
    <property type="project" value="TAIR"/>
</dbReference>
<dbReference type="GO" id="GO:0005737">
    <property type="term" value="C:cytoplasm"/>
    <property type="evidence" value="ECO:0000314"/>
    <property type="project" value="UniProtKB"/>
</dbReference>
<dbReference type="GO" id="GO:0005829">
    <property type="term" value="C:cytosol"/>
    <property type="evidence" value="ECO:0007005"/>
    <property type="project" value="TAIR"/>
</dbReference>
<dbReference type="GO" id="GO:0005615">
    <property type="term" value="C:extracellular space"/>
    <property type="evidence" value="ECO:0000314"/>
    <property type="project" value="UniProtKB"/>
</dbReference>
<dbReference type="GO" id="GO:0005634">
    <property type="term" value="C:nucleus"/>
    <property type="evidence" value="ECO:0000314"/>
    <property type="project" value="UniProtKB"/>
</dbReference>
<dbReference type="GO" id="GO:0005777">
    <property type="term" value="C:peroxisome"/>
    <property type="evidence" value="ECO:0007005"/>
    <property type="project" value="TAIR"/>
</dbReference>
<dbReference type="GO" id="GO:0009506">
    <property type="term" value="C:plasmodesma"/>
    <property type="evidence" value="ECO:0007005"/>
    <property type="project" value="TAIR"/>
</dbReference>
<dbReference type="GO" id="GO:0005773">
    <property type="term" value="C:vacuole"/>
    <property type="evidence" value="ECO:0007005"/>
    <property type="project" value="TAIR"/>
</dbReference>
<dbReference type="GO" id="GO:0003690">
    <property type="term" value="F:double-stranded DNA binding"/>
    <property type="evidence" value="ECO:0000314"/>
    <property type="project" value="TAIR"/>
</dbReference>
<dbReference type="GO" id="GO:0035198">
    <property type="term" value="F:miRNA binding"/>
    <property type="evidence" value="ECO:0000314"/>
    <property type="project" value="UniProtKB"/>
</dbReference>
<dbReference type="GO" id="GO:0003729">
    <property type="term" value="F:mRNA binding"/>
    <property type="evidence" value="ECO:0000314"/>
    <property type="project" value="TAIR"/>
</dbReference>
<dbReference type="GO" id="GO:0003723">
    <property type="term" value="F:RNA binding"/>
    <property type="evidence" value="ECO:0000314"/>
    <property type="project" value="UniProtKB"/>
</dbReference>
<dbReference type="GO" id="GO:0003697">
    <property type="term" value="F:single-stranded DNA binding"/>
    <property type="evidence" value="ECO:0000314"/>
    <property type="project" value="TAIR"/>
</dbReference>
<dbReference type="GO" id="GO:0003727">
    <property type="term" value="F:single-stranded RNA binding"/>
    <property type="evidence" value="ECO:0000314"/>
    <property type="project" value="UniProtKB"/>
</dbReference>
<dbReference type="GO" id="GO:0035197">
    <property type="term" value="F:siRNA binding"/>
    <property type="evidence" value="ECO:0000314"/>
    <property type="project" value="UniProtKB"/>
</dbReference>
<dbReference type="GO" id="GO:0000380">
    <property type="term" value="P:alternative mRNA splicing, via spliceosome"/>
    <property type="evidence" value="ECO:0000315"/>
    <property type="project" value="TAIR"/>
</dbReference>
<dbReference type="GO" id="GO:0007623">
    <property type="term" value="P:circadian rhythm"/>
    <property type="evidence" value="ECO:0000270"/>
    <property type="project" value="TAIR"/>
</dbReference>
<dbReference type="GO" id="GO:0006858">
    <property type="term" value="P:extracellular transport"/>
    <property type="evidence" value="ECO:0000314"/>
    <property type="project" value="UniProtKB"/>
</dbReference>
<dbReference type="GO" id="GO:0045087">
    <property type="term" value="P:innate immune response"/>
    <property type="evidence" value="ECO:0000314"/>
    <property type="project" value="TAIR"/>
</dbReference>
<dbReference type="GO" id="GO:1990428">
    <property type="term" value="P:miRNA transport"/>
    <property type="evidence" value="ECO:0000314"/>
    <property type="project" value="UniProtKB"/>
</dbReference>
<dbReference type="GO" id="GO:0006406">
    <property type="term" value="P:mRNA export from nucleus"/>
    <property type="evidence" value="ECO:0000315"/>
    <property type="project" value="TAIR"/>
</dbReference>
<dbReference type="GO" id="GO:0050688">
    <property type="term" value="P:regulation of defense response to virus"/>
    <property type="evidence" value="ECO:0000314"/>
    <property type="project" value="UniProtKB"/>
</dbReference>
<dbReference type="GO" id="GO:0010119">
    <property type="term" value="P:regulation of stomatal movement"/>
    <property type="evidence" value="ECO:0000315"/>
    <property type="project" value="TAIR"/>
</dbReference>
<dbReference type="GO" id="GO:0009409">
    <property type="term" value="P:response to cold"/>
    <property type="evidence" value="ECO:0000270"/>
    <property type="project" value="UniProtKB"/>
</dbReference>
<dbReference type="GO" id="GO:0006970">
    <property type="term" value="P:response to osmotic stress"/>
    <property type="evidence" value="ECO:0000315"/>
    <property type="project" value="TAIR"/>
</dbReference>
<dbReference type="GO" id="GO:0009651">
    <property type="term" value="P:response to salt stress"/>
    <property type="evidence" value="ECO:0000270"/>
    <property type="project" value="UniProtKB"/>
</dbReference>
<dbReference type="GO" id="GO:0009414">
    <property type="term" value="P:response to water deprivation"/>
    <property type="evidence" value="ECO:0000270"/>
    <property type="project" value="UniProtKB"/>
</dbReference>
<dbReference type="GO" id="GO:0010043">
    <property type="term" value="P:response to zinc ion"/>
    <property type="evidence" value="ECO:0000270"/>
    <property type="project" value="TAIR"/>
</dbReference>
<dbReference type="GO" id="GO:0050658">
    <property type="term" value="P:RNA transport"/>
    <property type="evidence" value="ECO:0000314"/>
    <property type="project" value="UniProtKB"/>
</dbReference>
<dbReference type="GO" id="GO:0010228">
    <property type="term" value="P:vegetative to reproductive phase transition of meristem"/>
    <property type="evidence" value="ECO:0000315"/>
    <property type="project" value="TAIR"/>
</dbReference>
<dbReference type="CDD" id="cd21608">
    <property type="entry name" value="RRM2_NsCP33_like"/>
    <property type="match status" value="1"/>
</dbReference>
<dbReference type="FunFam" id="3.30.70.330:FF:001313">
    <property type="entry name" value="Glycine-rich RNA-binding protein 7"/>
    <property type="match status" value="1"/>
</dbReference>
<dbReference type="Gene3D" id="3.30.70.330">
    <property type="match status" value="1"/>
</dbReference>
<dbReference type="InterPro" id="IPR012677">
    <property type="entry name" value="Nucleotide-bd_a/b_plait_sf"/>
</dbReference>
<dbReference type="InterPro" id="IPR035979">
    <property type="entry name" value="RBD_domain_sf"/>
</dbReference>
<dbReference type="InterPro" id="IPR048289">
    <property type="entry name" value="RRM2_NsCP33-like"/>
</dbReference>
<dbReference type="InterPro" id="IPR000504">
    <property type="entry name" value="RRM_dom"/>
</dbReference>
<dbReference type="InterPro" id="IPR052462">
    <property type="entry name" value="SLIRP/GR-RBP-like"/>
</dbReference>
<dbReference type="PANTHER" id="PTHR48027">
    <property type="entry name" value="HETEROGENEOUS NUCLEAR RIBONUCLEOPROTEIN 87F-RELATED"/>
    <property type="match status" value="1"/>
</dbReference>
<dbReference type="Pfam" id="PF00076">
    <property type="entry name" value="RRM_1"/>
    <property type="match status" value="1"/>
</dbReference>
<dbReference type="SMART" id="SM00360">
    <property type="entry name" value="RRM"/>
    <property type="match status" value="1"/>
</dbReference>
<dbReference type="SUPFAM" id="SSF54928">
    <property type="entry name" value="RNA-binding domain, RBD"/>
    <property type="match status" value="1"/>
</dbReference>
<dbReference type="PROSITE" id="PS50102">
    <property type="entry name" value="RRM"/>
    <property type="match status" value="1"/>
</dbReference>
<evidence type="ECO:0000255" key="1">
    <source>
        <dbReference type="PROSITE-ProRule" id="PRU00176"/>
    </source>
</evidence>
<evidence type="ECO:0000256" key="2">
    <source>
        <dbReference type="SAM" id="MobiDB-lite"/>
    </source>
</evidence>
<evidence type="ECO:0000269" key="3">
    <source>
    </source>
</evidence>
<evidence type="ECO:0000269" key="4">
    <source>
    </source>
</evidence>
<evidence type="ECO:0000269" key="5">
    <source>
    </source>
</evidence>
<evidence type="ECO:0000269" key="6">
    <source>
    </source>
</evidence>
<evidence type="ECO:0000269" key="7">
    <source>
    </source>
</evidence>
<evidence type="ECO:0000269" key="8">
    <source>
    </source>
</evidence>
<evidence type="ECO:0000269" key="9">
    <source>
    </source>
</evidence>
<evidence type="ECO:0000269" key="10">
    <source>
    </source>
</evidence>
<evidence type="ECO:0000269" key="11">
    <source>
    </source>
</evidence>
<evidence type="ECO:0000269" key="12">
    <source>
    </source>
</evidence>
<evidence type="ECO:0000269" key="13">
    <source>
    </source>
</evidence>
<evidence type="ECO:0000269" key="14">
    <source>
    </source>
</evidence>
<evidence type="ECO:0000269" key="15">
    <source>
    </source>
</evidence>
<evidence type="ECO:0000269" key="16">
    <source>
    </source>
</evidence>
<evidence type="ECO:0000269" key="17">
    <source>
    </source>
</evidence>
<evidence type="ECO:0000269" key="18">
    <source>
    </source>
</evidence>
<evidence type="ECO:0000269" key="19">
    <source>
    </source>
</evidence>
<evidence type="ECO:0000269" key="20">
    <source>
    </source>
</evidence>
<evidence type="ECO:0000269" key="21">
    <source>
    </source>
</evidence>
<evidence type="ECO:0000269" key="22">
    <source>
    </source>
</evidence>
<evidence type="ECO:0000303" key="23">
    <source>
    </source>
</evidence>
<evidence type="ECO:0000303" key="24">
    <source>
    </source>
</evidence>
<evidence type="ECO:0000303" key="25">
    <source>
    </source>
</evidence>
<evidence type="ECO:0000303" key="26">
    <source>
    </source>
</evidence>
<evidence type="ECO:0000303" key="27">
    <source>
    </source>
</evidence>
<evidence type="ECO:0000303" key="28">
    <source>
    </source>
</evidence>
<evidence type="ECO:0000303" key="29">
    <source>
    </source>
</evidence>
<evidence type="ECO:0000305" key="30"/>
<evidence type="ECO:0000305" key="31">
    <source>
    </source>
</evidence>
<evidence type="ECO:0000312" key="32">
    <source>
        <dbReference type="Araport" id="AT2G21660"/>
    </source>
</evidence>
<evidence type="ECO:0000312" key="33">
    <source>
        <dbReference type="EMBL" id="AAD23639.1"/>
    </source>
</evidence>
<evidence type="ECO:0007744" key="34">
    <source>
    </source>
</evidence>
<evidence type="ECO:0007744" key="35">
    <source>
    </source>
</evidence>
<evidence type="ECO:0007744" key="36">
    <source>
    </source>
</evidence>
<accession>Q03250</accession>
<accession>A0A6B9JEL0</accession>
<accession>C0Z304</accession>
<accession>Q8LEV4</accession>
<accession>Q94B62</accession>
<keyword id="KW-0007">Acetylation</keyword>
<keyword id="KW-0013">ADP-ribosylation</keyword>
<keyword id="KW-0025">Alternative splicing</keyword>
<keyword id="KW-0143">Chaperone</keyword>
<keyword id="KW-0963">Cytoplasm</keyword>
<keyword id="KW-0391">Immunity</keyword>
<keyword id="KW-0399">Innate immunity</keyword>
<keyword id="KW-0507">mRNA processing</keyword>
<keyword id="KW-0508">mRNA splicing</keyword>
<keyword id="KW-0539">Nucleus</keyword>
<keyword id="KW-0597">Phosphoprotein</keyword>
<keyword id="KW-0611">Plant defense</keyword>
<keyword id="KW-1185">Reference proteome</keyword>
<keyword id="KW-0694">RNA-binding</keyword>
<keyword id="KW-0964">Secreted</keyword>
<reference key="1">
    <citation type="journal article" date="1993" name="Plant Mol. Biol.">
        <title>Two cDNAs from Arabidopsis thaliana encode putative RNA binding proteins containing glycine-rich domains.</title>
        <authorList>
            <person name="van Nocker S."/>
            <person name="Vierstra R.D."/>
        </authorList>
    </citation>
    <scope>NUCLEOTIDE SEQUENCE [MRNA] (ISOFORM 1)</scope>
    <source>
        <strain>cv. Columbia</strain>
        <tissue>Leaf</tissue>
    </source>
</reference>
<reference key="2">
    <citation type="journal article" date="1994" name="Plant Physiol.">
        <title>Genes encoding glycine-rich Arabidopsis thaliana proteins with RNA-binding motifs are influenced by cold treatment and an endogenous circadian rhythm.</title>
        <authorList>
            <person name="Carpenter C.D."/>
            <person name="Kreps J.A."/>
            <person name="Simon A.E."/>
        </authorList>
    </citation>
    <scope>NUCLEOTIDE SEQUENCE [MRNA] (ISOFORM 2)</scope>
    <scope>ALTERNATIVE SPLICING</scope>
    <scope>INDUCTION BY COLD AND CIRCADIAN RHYTHM</scope>
    <scope>TISSUE SPECIFICITY</scope>
    <source>
        <strain>cv. Columbia</strain>
    </source>
</reference>
<reference key="3">
    <citation type="journal article" date="2020" name="Mol. Plant">
        <title>A plant SMALL RNA-BINDING PROTEIN 1 family mediates cell-to-cell trafficking of RNAi signals.</title>
        <authorList>
            <person name="Yan Y."/>
            <person name="Ham B.-K."/>
            <person name="Chong Y.H."/>
            <person name="Yeh S.-D."/>
            <person name="Lucas W.J."/>
        </authorList>
    </citation>
    <scope>NUCLEOTIDE SEQUENCE [MRNA] (ISOFORM 1)</scope>
    <scope>FUNCTION</scope>
    <scope>DISRUPTION PHENOTYPE</scope>
    <scope>DOMAIN</scope>
    <scope>SUBUNIT</scope>
    <scope>GENE FAMILY</scope>
    <source>
        <strain>cv. Columbia</strain>
    </source>
</reference>
<reference key="4">
    <citation type="journal article" date="1999" name="Nature">
        <title>Sequence and analysis of chromosome 2 of the plant Arabidopsis thaliana.</title>
        <authorList>
            <person name="Lin X."/>
            <person name="Kaul S."/>
            <person name="Rounsley S.D."/>
            <person name="Shea T.P."/>
            <person name="Benito M.-I."/>
            <person name="Town C.D."/>
            <person name="Fujii C.Y."/>
            <person name="Mason T.M."/>
            <person name="Bowman C.L."/>
            <person name="Barnstead M.E."/>
            <person name="Feldblyum T.V."/>
            <person name="Buell C.R."/>
            <person name="Ketchum K.A."/>
            <person name="Lee J.J."/>
            <person name="Ronning C.M."/>
            <person name="Koo H.L."/>
            <person name="Moffat K.S."/>
            <person name="Cronin L.A."/>
            <person name="Shen M."/>
            <person name="Pai G."/>
            <person name="Van Aken S."/>
            <person name="Umayam L."/>
            <person name="Tallon L.J."/>
            <person name="Gill J.E."/>
            <person name="Adams M.D."/>
            <person name="Carrera A.J."/>
            <person name="Creasy T.H."/>
            <person name="Goodman H.M."/>
            <person name="Somerville C.R."/>
            <person name="Copenhaver G.P."/>
            <person name="Preuss D."/>
            <person name="Nierman W.C."/>
            <person name="White O."/>
            <person name="Eisen J.A."/>
            <person name="Salzberg S.L."/>
            <person name="Fraser C.M."/>
            <person name="Venter J.C."/>
        </authorList>
    </citation>
    <scope>NUCLEOTIDE SEQUENCE [LARGE SCALE GENOMIC DNA]</scope>
    <source>
        <strain>cv. Columbia</strain>
    </source>
</reference>
<reference key="5">
    <citation type="journal article" date="2017" name="Plant J.">
        <title>Araport11: a complete reannotation of the Arabidopsis thaliana reference genome.</title>
        <authorList>
            <person name="Cheng C.Y."/>
            <person name="Krishnakumar V."/>
            <person name="Chan A.P."/>
            <person name="Thibaud-Nissen F."/>
            <person name="Schobel S."/>
            <person name="Town C.D."/>
        </authorList>
    </citation>
    <scope>GENOME REANNOTATION</scope>
    <source>
        <strain>cv. Columbia</strain>
    </source>
</reference>
<reference key="6">
    <citation type="journal article" date="2003" name="Science">
        <title>Empirical analysis of transcriptional activity in the Arabidopsis genome.</title>
        <authorList>
            <person name="Yamada K."/>
            <person name="Lim J."/>
            <person name="Dale J.M."/>
            <person name="Chen H."/>
            <person name="Shinn P."/>
            <person name="Palm C.J."/>
            <person name="Southwick A.M."/>
            <person name="Wu H.C."/>
            <person name="Kim C.J."/>
            <person name="Nguyen M."/>
            <person name="Pham P.K."/>
            <person name="Cheuk R.F."/>
            <person name="Karlin-Newmann G."/>
            <person name="Liu S.X."/>
            <person name="Lam B."/>
            <person name="Sakano H."/>
            <person name="Wu T."/>
            <person name="Yu G."/>
            <person name="Miranda M."/>
            <person name="Quach H.L."/>
            <person name="Tripp M."/>
            <person name="Chang C.H."/>
            <person name="Lee J.M."/>
            <person name="Toriumi M.J."/>
            <person name="Chan M.M."/>
            <person name="Tang C.C."/>
            <person name="Onodera C.S."/>
            <person name="Deng J.M."/>
            <person name="Akiyama K."/>
            <person name="Ansari Y."/>
            <person name="Arakawa T."/>
            <person name="Banh J."/>
            <person name="Banno F."/>
            <person name="Bowser L."/>
            <person name="Brooks S.Y."/>
            <person name="Carninci P."/>
            <person name="Chao Q."/>
            <person name="Choy N."/>
            <person name="Enju A."/>
            <person name="Goldsmith A.D."/>
            <person name="Gurjal M."/>
            <person name="Hansen N.F."/>
            <person name="Hayashizaki Y."/>
            <person name="Johnson-Hopson C."/>
            <person name="Hsuan V.W."/>
            <person name="Iida K."/>
            <person name="Karnes M."/>
            <person name="Khan S."/>
            <person name="Koesema E."/>
            <person name="Ishida J."/>
            <person name="Jiang P.X."/>
            <person name="Jones T."/>
            <person name="Kawai J."/>
            <person name="Kamiya A."/>
            <person name="Meyers C."/>
            <person name="Nakajima M."/>
            <person name="Narusaka M."/>
            <person name="Seki M."/>
            <person name="Sakurai T."/>
            <person name="Satou M."/>
            <person name="Tamse R."/>
            <person name="Vaysberg M."/>
            <person name="Wallender E.K."/>
            <person name="Wong C."/>
            <person name="Yamamura Y."/>
            <person name="Yuan S."/>
            <person name="Shinozaki K."/>
            <person name="Davis R.W."/>
            <person name="Theologis A."/>
            <person name="Ecker J.R."/>
        </authorList>
    </citation>
    <scope>NUCLEOTIDE SEQUENCE [LARGE SCALE MRNA] (ISOFORMS 1 AND 2)</scope>
    <source>
        <strain>cv. Columbia</strain>
    </source>
</reference>
<reference key="7">
    <citation type="journal article" date="2009" name="DNA Res.">
        <title>Analysis of multiple occurrences of alternative splicing events in Arabidopsis thaliana using novel sequenced full-length cDNAs.</title>
        <authorList>
            <person name="Iida K."/>
            <person name="Fukami-Kobayashi K."/>
            <person name="Toyoda A."/>
            <person name="Sakaki Y."/>
            <person name="Kobayashi M."/>
            <person name="Seki M."/>
            <person name="Shinozaki K."/>
        </authorList>
    </citation>
    <scope>NUCLEOTIDE SEQUENCE [LARGE SCALE MRNA] (ISOFORM 2)</scope>
    <source>
        <strain>cv. Columbia</strain>
        <tissue>Flower</tissue>
        <tissue>Silique</tissue>
    </source>
</reference>
<reference key="8">
    <citation type="submission" date="2002-03" db="EMBL/GenBank/DDBJ databases">
        <title>Full-length cDNA from Arabidopsis thaliana.</title>
        <authorList>
            <person name="Brover V.V."/>
            <person name="Troukhan M.E."/>
            <person name="Alexandrov N.A."/>
            <person name="Lu Y.-P."/>
            <person name="Flavell R.B."/>
            <person name="Feldmann K.A."/>
        </authorList>
    </citation>
    <scope>NUCLEOTIDE SEQUENCE [LARGE SCALE MRNA] (ISOFORM 1)</scope>
</reference>
<reference key="9">
    <citation type="journal article" date="1997" name="Proc. Natl. Acad. Sci. U.S.A.">
        <title>AtGRP7, a nuclear RNA-binding protein as a component of a circadian-regulated negative feedback loop in Arabidopsis thaliana.</title>
        <authorList>
            <person name="Heintzen C."/>
            <person name="Nater M."/>
            <person name="Apel K."/>
            <person name="Staiger D."/>
        </authorList>
    </citation>
    <scope>INDUCTION BY CIRCADIAN RHYTHM</scope>
    <scope>FUNCTION</scope>
</reference>
<reference key="10">
    <citation type="journal article" date="2001" name="Philos. Trans. R. Soc. Lond., B, Biol. Sci.">
        <title>RNA-binding proteins and circadian rhythms in Arabidopsis thaliana.</title>
        <authorList>
            <person name="Staiger D."/>
        </authorList>
    </citation>
    <scope>FUNCTION</scope>
    <scope>REVIEW</scope>
</reference>
<reference key="11">
    <citation type="journal article" date="2002" name="Nucleic Acids Res.">
        <title>Genome analysis: RNA recognition motif (RRM) and K homology (KH) domain RNA-binding proteins from the flowering plant Arabidopsis thaliana.</title>
        <authorList>
            <person name="Lorkovic Z.J."/>
            <person name="Barta A."/>
        </authorList>
    </citation>
    <scope>GENE FAMILY</scope>
</reference>
<reference key="12">
    <citation type="journal article" date="2003" name="Plant J.">
        <title>The circadian clock regulated RNA-binding protein AtGRP7 autoregulates its expression by influencing alternative splicing of its own pre-mRNA.</title>
        <authorList>
            <person name="Staiger D."/>
            <person name="Zecca L."/>
            <person name="Wieczorek Kirk D.A."/>
            <person name="Apel K."/>
            <person name="Eckstein L."/>
        </authorList>
    </citation>
    <scope>FUNCTION</scope>
    <scope>ALTERNATIVE SPLICING</scope>
</reference>
<reference key="13">
    <citation type="journal article" date="2003" name="Plant Mol. Biol.">
        <title>Arabidopsis transportin1 is the nuclear import receptor for the circadian clock-regulated RNA-binding protein AtGRP7.</title>
        <authorList>
            <person name="Ziemienowicz A."/>
            <person name="Haasen D."/>
            <person name="Staiger D."/>
            <person name="Merkle T."/>
        </authorList>
    </citation>
    <scope>SUBCELLULAR LOCATION</scope>
    <scope>INTERACTION WITH TRN1</scope>
    <scope>NUCLEAR LOCALIZATION SIGNAL</scope>
</reference>
<reference key="14">
    <citation type="journal article" date="2005" name="J. Exp. Bot.">
        <title>Characterization of transgenic Arabidopsis plants overexpressing GR-RBP4 under high salinity, dehydration, or cold stress.</title>
        <authorList>
            <person name="Kwak K.J."/>
            <person name="Kim Y.O."/>
            <person name="Kang H."/>
        </authorList>
    </citation>
    <scope>INDUCTION BY COLD; DEHYDRATION AND SALT</scope>
    <scope>FUNCTION</scope>
</reference>
<reference key="15">
    <citation type="journal article" date="2006" name="Cell. Mol. Biol. Lett.">
        <title>AtGRP7 is involved in the regulation of abscisic acid and stress responses in Arabidopsis.</title>
        <authorList>
            <person name="Cao S."/>
            <person name="Jiang L."/>
            <person name="Song S."/>
            <person name="Jing R."/>
            <person name="Xu G."/>
        </authorList>
    </citation>
    <scope>INDUCTION</scope>
    <scope>DISRUPTION PHENOTYPE</scope>
    <scope>FUNCTION</scope>
</reference>
<reference key="16">
    <citation type="journal article" date="2007" name="Nature">
        <title>A type III effector ADP-ribosylates RNA-binding proteins and quells plant immunity.</title>
        <authorList>
            <person name="Fu Z.Q."/>
            <person name="Guo M."/>
            <person name="Jeong B.R."/>
            <person name="Tian F."/>
            <person name="Elthon T.E."/>
            <person name="Cerny R.L."/>
            <person name="Staiger D."/>
            <person name="Alfano J.R."/>
        </authorList>
    </citation>
    <scope>DISRUPTION PHENOTYPE</scope>
    <scope>ADP-RIBOSYLATION</scope>
    <scope>IDENTIFICATION BY MASS SPECTROMETRY</scope>
    <scope>MUTAGENESIS OF ARG-47 AND ARG-49</scope>
    <scope>SUBCELLULAR LOCATION</scope>
</reference>
<reference key="17">
    <citation type="journal article" date="2007" name="Nucleic Acids Res.">
        <title>Cold shock domain proteins and glycine-rich RNA-binding proteins from Arabidopsis thaliana can promote the cold adaptation process in Escherichia coli.</title>
        <authorList>
            <person name="Kim J.S."/>
            <person name="Park S.J."/>
            <person name="Kwak K.J."/>
            <person name="Kim Y.O."/>
            <person name="Kim J.Y."/>
            <person name="Song J."/>
            <person name="Jang B."/>
            <person name="Jung C.-H."/>
            <person name="Kang H."/>
        </authorList>
    </citation>
    <scope>INDUCTION BY COLD</scope>
    <scope>FUNCTION</scope>
</reference>
<reference key="18">
    <citation type="journal article" date="2007" name="Plant Cell">
        <title>Proteome analysis of Arabidopsis leaf peroxisomes reveals novel targeting peptides, metabolic pathways, and defense mechanisms.</title>
        <authorList>
            <person name="Reumann S."/>
            <person name="Babujee L."/>
            <person name="Ma C."/>
            <person name="Wienkoop S."/>
            <person name="Siemsen T."/>
            <person name="Antonicelli G.E."/>
            <person name="Rasche N."/>
            <person name="Lueder F."/>
            <person name="Weckwerth W."/>
            <person name="Jahn O."/>
        </authorList>
    </citation>
    <scope>IDENTIFICATION BY MASS SPECTROMETRY</scope>
</reference>
<reference key="19">
    <citation type="journal article" date="2007" name="Plant J.">
        <title>Auto-regulation of the circadian slave oscillator component AtGRP7 and regulation of its targets is impaired by a single RNA recognition motif point mutation.</title>
        <authorList>
            <person name="Schoening J.C."/>
            <person name="Streitner C."/>
            <person name="Page D.R."/>
            <person name="Hennig S."/>
            <person name="Uchida K."/>
            <person name="Wolf E."/>
            <person name="Furuya M."/>
            <person name="Staiger D."/>
        </authorList>
    </citation>
    <scope>MUTAGENESIS OF ARG-49</scope>
    <scope>FUNCTION</scope>
</reference>
<reference key="20">
    <citation type="journal article" date="2008" name="J. Am. Chem. Soc.">
        <title>Changes in conformational dynamics of mRNA upon AtGRP7 binding studied by fluorescence correlation spectroscopy.</title>
        <authorList>
            <person name="Schuettpelz M."/>
            <person name="Schoening J.C."/>
            <person name="Doose S."/>
            <person name="Neuweiler H."/>
            <person name="Peters E."/>
            <person name="Staiger D."/>
            <person name="Sauer M."/>
        </authorList>
    </citation>
    <scope>RNA-BINDING</scope>
</reference>
<reference key="21">
    <citation type="journal article" date="2008" name="Nucleic Acids Res.">
        <title>Reciprocal regulation of glycine-rich RNA-binding proteins via an interlocked feedback loop coupling alternative splicing to nonsense-mediated decay in Arabidopsis.</title>
        <authorList>
            <person name="Schoening J.C."/>
            <person name="Streitner C."/>
            <person name="Meyer I.M."/>
            <person name="Gao Y."/>
            <person name="Staiger D."/>
        </authorList>
    </citation>
    <scope>FUNCTION</scope>
    <scope>ALTERNATIVE SPLICING</scope>
    <scope>INDUCTION BY COLD</scope>
</reference>
<reference key="22">
    <citation type="journal article" date="2008" name="Plant J.">
        <title>Glycine-rich RNA-binding protein 7 affects abiotic stress responses by regulating stomata opening and closing in Arabidopsis thaliana.</title>
        <authorList>
            <person name="Kim J.S."/>
            <person name="Jung H.J."/>
            <person name="Lee H.J."/>
            <person name="Kim K.A."/>
            <person name="Goh C.H."/>
            <person name="Woo Y."/>
            <person name="Oh S.H."/>
            <person name="Han Y.S."/>
            <person name="Kang H."/>
        </authorList>
    </citation>
    <scope>FUNCTION</scope>
    <scope>DISRUPTION PHENOTYPE</scope>
    <scope>SUBCELLULAR LOCATION</scope>
    <scope>TISSUE SPECIFICITY</scope>
</reference>
<reference key="23">
    <citation type="journal article" date="2008" name="Plant J.">
        <title>The small glycine-rich RNA binding protein AtGRP7 promotes floral transition in Arabidopsis thaliana.</title>
        <authorList>
            <person name="Streitner C."/>
            <person name="Danisman S."/>
            <person name="Wehrle F."/>
            <person name="Schoening J.C."/>
            <person name="Alfano J.R."/>
            <person name="Staiger D."/>
        </authorList>
    </citation>
    <scope>FUNCTION</scope>
    <scope>DISRUPTION PHENOTYPE</scope>
</reference>
<reference key="24">
    <citation type="journal article" date="2009" name="Methods Mol. Biol.">
        <title>RNA-protein interaction mediating post-transcriptional regulation in the circadian system.</title>
        <authorList>
            <person name="Schoening J.C."/>
            <person name="Staiger D."/>
        </authorList>
    </citation>
    <scope>FUNCTION</scope>
    <scope>RNA-BINDING</scope>
</reference>
<reference key="25">
    <citation type="journal article" date="2009" name="Plant Physiol.">
        <title>Large-scale Arabidopsis phosphoproteome profiling reveals novel chloroplast kinase substrates and phosphorylation networks.</title>
        <authorList>
            <person name="Reiland S."/>
            <person name="Messerli G."/>
            <person name="Baerenfaller K."/>
            <person name="Gerrits B."/>
            <person name="Endler A."/>
            <person name="Grossmann J."/>
            <person name="Gruissem W."/>
            <person name="Baginsky S."/>
        </authorList>
    </citation>
    <scope>PHOSPHORYLATION [LARGE SCALE ANALYSIS] AT SER-105</scope>
    <scope>IDENTIFICATION BY MASS SPECTROMETRY [LARGE SCALE ANALYSIS]</scope>
</reference>
<reference key="26">
    <citation type="journal article" date="2010" name="Mol. Biol. Rep.">
        <title>A proteomic analysis of oligo(dT)-bound mRNP containing oxidative stress-induced Arabidopsis thaliana RNA-binding proteins ATGRP7 and ATGRP8.</title>
        <authorList>
            <person name="Schmidt F."/>
            <person name="Marnef A."/>
            <person name="Cheung M.K."/>
            <person name="Wilson I."/>
            <person name="Hancock J."/>
            <person name="Staiger D."/>
            <person name="Ladomery M."/>
        </authorList>
    </citation>
    <scope>IDENTIFICATION BY MASS SPECTROMETRY</scope>
    <scope>INDUCTION BY HYDROGEN PEROXIDE</scope>
    <scope>RNA-BINDING</scope>
</reference>
<reference key="27">
    <citation type="journal article" date="2010" name="Plant Signal. Behav.">
        <title>Functional diversity of the plant glycine-rich proteins superfamily.</title>
        <authorList>
            <person name="Mangeon A."/>
            <person name="Junqueira R.M."/>
            <person name="Sachetto-Martins G."/>
        </authorList>
    </citation>
    <scope>NOMENCLATURE</scope>
</reference>
<reference key="28">
    <citation type="journal article" date="2011" name="J. Biol. Chem.">
        <title>Structure function analysis of an ADP-ribosyltransferase type III effector and its RNA-binding target in plant immunity.</title>
        <authorList>
            <person name="Jeong B.R."/>
            <person name="Lin Y."/>
            <person name="Joe A."/>
            <person name="Guo M."/>
            <person name="Korneli C."/>
            <person name="Yang H."/>
            <person name="Wang P."/>
            <person name="Yu M."/>
            <person name="Cerny R.L."/>
            <person name="Staiger D."/>
            <person name="Alfano J.R."/>
            <person name="Xu Y."/>
        </authorList>
    </citation>
    <scope>FUNCTION</scope>
    <scope>INTERACTION WITH HOPU1</scope>
    <scope>MUTAGENESIS OF ARG-49</scope>
    <scope>ADP-RIBOSYLATION AT ARG-49</scope>
    <scope>DISRUPTION PHENOTYPE</scope>
</reference>
<reference key="29">
    <citation type="journal article" date="2011" name="J. Exp. Bot.">
        <title>Structural determinants crucial to the RNA chaperone activity of glycine-rich RNA-binding proteins 4 and 7 in Arabidopsis thaliana during the cold adaptation process.</title>
        <authorList>
            <person name="Kwak K.J."/>
            <person name="Park S.J."/>
            <person name="Han J.H."/>
            <person name="Kim M.K."/>
            <person name="Oh S.H."/>
            <person name="Han Y.S."/>
            <person name="Kang H."/>
        </authorList>
    </citation>
    <scope>FUNCTION</scope>
    <scope>DOMAIN</scope>
</reference>
<reference key="30">
    <citation type="journal article" date="2011" name="Traffic">
        <title>Reversible photoswitchable DRONPA-s monitors nucleocytoplasmic transport of an RNA-binding protein in transgenic plants.</title>
        <authorList>
            <person name="Lummer M."/>
            <person name="Humpert F."/>
            <person name="Steuwe C."/>
            <person name="Caesar K."/>
            <person name="Schuettpelz M."/>
            <person name="Sauer M."/>
            <person name="Staiger D."/>
        </authorList>
    </citation>
    <scope>SUBCELLULAR LOCATION</scope>
</reference>
<reference key="31">
    <citation type="journal article" date="2012" name="J. Proteome Res.">
        <title>Identification of phosphoproteins in Arabidopsis thaliana leaves using polyethylene glycol fractionation, immobilized metal-ion affinity chromatography, two-dimensional gel electrophoresis and mass spectrometry.</title>
        <authorList>
            <person name="Aryal U.K."/>
            <person name="Krochko J.E."/>
            <person name="Ross A.R."/>
        </authorList>
    </citation>
    <scope>PHOSPHORYLATION [LARGE SCALE ANALYSIS] AT SER-117</scope>
    <scope>IDENTIFICATION BY MASS SPECTROMETRY [LARGE SCALE ANALYSIS]</scope>
</reference>
<reference key="32">
    <citation type="journal article" date="2012" name="Mol. Cell. Proteomics">
        <title>Comparative large-scale characterisation of plant vs. mammal proteins reveals similar and idiosyncratic N-alpha acetylation features.</title>
        <authorList>
            <person name="Bienvenut W.V."/>
            <person name="Sumpton D."/>
            <person name="Martinez A."/>
            <person name="Lilla S."/>
            <person name="Espagne C."/>
            <person name="Meinnel T."/>
            <person name="Giglione C."/>
        </authorList>
    </citation>
    <scope>ACETYLATION [LARGE SCALE ANALYSIS] AT ALA-2</scope>
    <scope>CLEAVAGE OF INITIATOR METHIONINE [LARGE SCALE ANALYSIS]</scope>
    <scope>IDENTIFICATION BY MASS SPECTROMETRY [LARGE SCALE ANALYSIS]</scope>
</reference>
<reference key="33">
    <citation type="journal article" date="2012" name="Nucleic Acids Res.">
        <title>An hnRNP-like RNA-binding protein affects alternative splicing by in vivo interaction with transcripts in Arabidopsis thaliana.</title>
        <authorList>
            <person name="Streitner C."/>
            <person name="Koester T."/>
            <person name="Simpson C.G."/>
            <person name="Shaw P."/>
            <person name="Danisman S."/>
            <person name="Brown J.W."/>
            <person name="Staiger D."/>
        </authorList>
    </citation>
    <scope>FUNCTION</scope>
    <scope>MUTAGENESIS OF ARG-49</scope>
</reference>
<reference key="34">
    <citation type="journal article" date="2012" name="Plant Physiol. Biochem.">
        <title>Different roles of glycine-rich RNA-binding protein7 in plant defense against Pectobacterium carotovorum, Botrytis cinerea, and tobacco mosaic viruses.</title>
        <authorList>
            <person name="Lee H.J."/>
            <person name="Kim J.S."/>
            <person name="Yoo S.J."/>
            <person name="Kang E.Y."/>
            <person name="Han S.H."/>
            <person name="Yang K.Y."/>
            <person name="Kim Y.C."/>
            <person name="McSpadden Gardener B."/>
            <person name="Kang H."/>
        </authorList>
    </citation>
    <scope>FUNCTION</scope>
    <scope>INDUCTION BY PATHOGEN</scope>
    <scope>DISRUPTION PHENOTYPE</scope>
</reference>